<dbReference type="EMBL" id="X81704">
    <property type="protein sequence ID" value="CAA57348.1"/>
    <property type="molecule type" value="mRNA"/>
</dbReference>
<dbReference type="EMBL" id="DQ656490">
    <property type="protein sequence ID" value="ABG37911.1"/>
    <property type="molecule type" value="mRNA"/>
</dbReference>
<dbReference type="EMBL" id="BC102440">
    <property type="protein sequence ID" value="AAI02441.1"/>
    <property type="molecule type" value="mRNA"/>
</dbReference>
<dbReference type="EMBL" id="D49825">
    <property type="protein sequence ID" value="BAA08629.1"/>
    <property type="molecule type" value="mRNA"/>
</dbReference>
<dbReference type="PIR" id="S51648">
    <property type="entry name" value="S51648"/>
</dbReference>
<dbReference type="RefSeq" id="NP_776626.1">
    <property type="nucleotide sequence ID" value="NM_174201.2"/>
</dbReference>
<dbReference type="SMR" id="P67939"/>
<dbReference type="FunCoup" id="P67939">
    <property type="interactions" value="3550"/>
</dbReference>
<dbReference type="STRING" id="9913.ENSBTAP00000001420"/>
<dbReference type="PaxDb" id="9913-ENSBTAP00000001420"/>
<dbReference type="Ensembl" id="ENSBTAT00000001420.4">
    <property type="protein sequence ID" value="ENSBTAP00000001420.3"/>
    <property type="gene ID" value="ENSBTAG00000001069.5"/>
</dbReference>
<dbReference type="GeneID" id="281542"/>
<dbReference type="KEGG" id="bta:281542"/>
<dbReference type="CTD" id="7157"/>
<dbReference type="VEuPathDB" id="HostDB:ENSBTAG00000001069"/>
<dbReference type="VGNC" id="VGNC:36231">
    <property type="gene designation" value="TP53"/>
</dbReference>
<dbReference type="eggNOG" id="ENOG502QVY3">
    <property type="taxonomic scope" value="Eukaryota"/>
</dbReference>
<dbReference type="GeneTree" id="ENSGT00950000183153"/>
<dbReference type="HOGENOM" id="CLU_019621_0_0_1"/>
<dbReference type="InParanoid" id="P67939"/>
<dbReference type="OMA" id="HKKGEPC"/>
<dbReference type="OrthoDB" id="5915660at2759"/>
<dbReference type="TreeFam" id="TF106101"/>
<dbReference type="Reactome" id="R-BTA-2559580">
    <property type="pathway name" value="Oxidative Stress Induced Senescence"/>
</dbReference>
<dbReference type="Reactome" id="R-BTA-2559586">
    <property type="pathway name" value="DNA Damage/Telomere Stress Induced Senescence"/>
</dbReference>
<dbReference type="Reactome" id="R-BTA-349425">
    <property type="pathway name" value="Autodegradation of the E3 ubiquitin ligase COP1"/>
</dbReference>
<dbReference type="Reactome" id="R-BTA-5689880">
    <property type="pathway name" value="Ub-specific processing proteases"/>
</dbReference>
<dbReference type="Reactome" id="R-BTA-5689896">
    <property type="pathway name" value="Ovarian tumor domain proteases"/>
</dbReference>
<dbReference type="Reactome" id="R-BTA-5693565">
    <property type="pathway name" value="Recruitment and ATM-mediated phosphorylation of repair and signaling proteins at DNA double strand breaks"/>
</dbReference>
<dbReference type="Reactome" id="R-BTA-6804754">
    <property type="pathway name" value="Regulation of TP53 Expression"/>
</dbReference>
<dbReference type="Reactome" id="R-BTA-6804756">
    <property type="pathway name" value="Regulation of TP53 Activity through Phosphorylation"/>
</dbReference>
<dbReference type="Reactome" id="R-BTA-6804757">
    <property type="pathway name" value="Regulation of TP53 Degradation"/>
</dbReference>
<dbReference type="Reactome" id="R-BTA-6804758">
    <property type="pathway name" value="Regulation of TP53 Activity through Acetylation"/>
</dbReference>
<dbReference type="Reactome" id="R-BTA-6804759">
    <property type="pathway name" value="Regulation of TP53 Activity through Association with Co-factors"/>
</dbReference>
<dbReference type="Reactome" id="R-BTA-6804760">
    <property type="pathway name" value="Regulation of TP53 Activity through Methylation"/>
</dbReference>
<dbReference type="Reactome" id="R-BTA-6811555">
    <property type="pathway name" value="PI5P Regulates TP53 Acetylation"/>
</dbReference>
<dbReference type="Reactome" id="R-BTA-69473">
    <property type="pathway name" value="G2/M DNA damage checkpoint"/>
</dbReference>
<dbReference type="Reactome" id="R-BTA-69481">
    <property type="pathway name" value="G2/M Checkpoints"/>
</dbReference>
<dbReference type="Reactome" id="R-BTA-69541">
    <property type="pathway name" value="Stabilization of p53"/>
</dbReference>
<dbReference type="Reactome" id="R-BTA-69895">
    <property type="pathway name" value="Transcriptional activation of cell cycle inhibitor p21"/>
</dbReference>
<dbReference type="Reactome" id="R-BTA-8852276">
    <property type="pathway name" value="The role of GTSE1 in G2/M progression after G2 checkpoint"/>
</dbReference>
<dbReference type="Reactome" id="R-BTA-8941855">
    <property type="pathway name" value="RUNX3 regulates CDKN1A transcription"/>
</dbReference>
<dbReference type="Reactome" id="R-BTA-9833482">
    <property type="pathway name" value="PKR-mediated signaling"/>
</dbReference>
<dbReference type="Proteomes" id="UP000009136">
    <property type="component" value="Chromosome 19"/>
</dbReference>
<dbReference type="Bgee" id="ENSBTAG00000001069">
    <property type="expression patterns" value="Expressed in blood and 105 other cell types or tissues"/>
</dbReference>
<dbReference type="GO" id="GO:0005813">
    <property type="term" value="C:centrosome"/>
    <property type="evidence" value="ECO:0000250"/>
    <property type="project" value="UniProtKB"/>
</dbReference>
<dbReference type="GO" id="GO:0005737">
    <property type="term" value="C:cytoplasm"/>
    <property type="evidence" value="ECO:0000314"/>
    <property type="project" value="AgBase"/>
</dbReference>
<dbReference type="GO" id="GO:0005783">
    <property type="term" value="C:endoplasmic reticulum"/>
    <property type="evidence" value="ECO:0007669"/>
    <property type="project" value="UniProtKB-SubCell"/>
</dbReference>
<dbReference type="GO" id="GO:0005759">
    <property type="term" value="C:mitochondrial matrix"/>
    <property type="evidence" value="ECO:0007669"/>
    <property type="project" value="UniProtKB-SubCell"/>
</dbReference>
<dbReference type="GO" id="GO:0005739">
    <property type="term" value="C:mitochondrion"/>
    <property type="evidence" value="ECO:0000250"/>
    <property type="project" value="UniProtKB"/>
</dbReference>
<dbReference type="GO" id="GO:0005730">
    <property type="term" value="C:nucleolus"/>
    <property type="evidence" value="ECO:0000250"/>
    <property type="project" value="UniProtKB"/>
</dbReference>
<dbReference type="GO" id="GO:0005634">
    <property type="term" value="C:nucleus"/>
    <property type="evidence" value="ECO:0000250"/>
    <property type="project" value="UniProtKB"/>
</dbReference>
<dbReference type="GO" id="GO:0005886">
    <property type="term" value="C:plasma membrane"/>
    <property type="evidence" value="ECO:0000314"/>
    <property type="project" value="AgBase"/>
</dbReference>
<dbReference type="GO" id="GO:0016605">
    <property type="term" value="C:PML body"/>
    <property type="evidence" value="ECO:0007669"/>
    <property type="project" value="UniProtKB-SubCell"/>
</dbReference>
<dbReference type="GO" id="GO:0036310">
    <property type="term" value="F:ATP-dependent DNA/DNA annealing activity"/>
    <property type="evidence" value="ECO:0000250"/>
    <property type="project" value="UniProtKB"/>
</dbReference>
<dbReference type="GO" id="GO:0005507">
    <property type="term" value="F:copper ion binding"/>
    <property type="evidence" value="ECO:0000250"/>
    <property type="project" value="UniProtKB"/>
</dbReference>
<dbReference type="GO" id="GO:0003677">
    <property type="term" value="F:DNA binding"/>
    <property type="evidence" value="ECO:0000250"/>
    <property type="project" value="UniProtKB"/>
</dbReference>
<dbReference type="GO" id="GO:0000981">
    <property type="term" value="F:DNA-binding transcription factor activity, RNA polymerase II-specific"/>
    <property type="evidence" value="ECO:0000250"/>
    <property type="project" value="UniProtKB"/>
</dbReference>
<dbReference type="GO" id="GO:0140693">
    <property type="term" value="F:molecular condensate scaffold activity"/>
    <property type="evidence" value="ECO:0000250"/>
    <property type="project" value="UniProtKB"/>
</dbReference>
<dbReference type="GO" id="GO:1990841">
    <property type="term" value="F:promoter-specific chromatin binding"/>
    <property type="evidence" value="ECO:0000250"/>
    <property type="project" value="UniProtKB"/>
</dbReference>
<dbReference type="GO" id="GO:0000978">
    <property type="term" value="F:RNA polymerase II cis-regulatory region sequence-specific DNA binding"/>
    <property type="evidence" value="ECO:0000250"/>
    <property type="project" value="UniProtKB"/>
</dbReference>
<dbReference type="GO" id="GO:0090398">
    <property type="term" value="P:cellular senescence"/>
    <property type="evidence" value="ECO:0000250"/>
    <property type="project" value="UniProtKB"/>
</dbReference>
<dbReference type="GO" id="GO:0048512">
    <property type="term" value="P:circadian behavior"/>
    <property type="evidence" value="ECO:0000250"/>
    <property type="project" value="UniProtKB"/>
</dbReference>
<dbReference type="GO" id="GO:0006974">
    <property type="term" value="P:DNA damage response"/>
    <property type="evidence" value="ECO:0000250"/>
    <property type="project" value="UniProtKB"/>
</dbReference>
<dbReference type="GO" id="GO:0043153">
    <property type="term" value="P:entrainment of circadian clock by photoperiod"/>
    <property type="evidence" value="ECO:0000250"/>
    <property type="project" value="UniProtKB"/>
</dbReference>
<dbReference type="GO" id="GO:0030308">
    <property type="term" value="P:negative regulation of cell growth"/>
    <property type="evidence" value="ECO:0000250"/>
    <property type="project" value="UniProtKB"/>
</dbReference>
<dbReference type="GO" id="GO:0045892">
    <property type="term" value="P:negative regulation of DNA-templated transcription"/>
    <property type="evidence" value="ECO:0000250"/>
    <property type="project" value="UniProtKB"/>
</dbReference>
<dbReference type="GO" id="GO:0006289">
    <property type="term" value="P:nucleotide-excision repair"/>
    <property type="evidence" value="ECO:0000250"/>
    <property type="project" value="UniProtKB"/>
</dbReference>
<dbReference type="GO" id="GO:0097252">
    <property type="term" value="P:oligodendrocyte apoptotic process"/>
    <property type="evidence" value="ECO:0000250"/>
    <property type="project" value="UniProtKB"/>
</dbReference>
<dbReference type="GO" id="GO:0043065">
    <property type="term" value="P:positive regulation of apoptotic process"/>
    <property type="evidence" value="ECO:0000250"/>
    <property type="project" value="UniProtKB"/>
</dbReference>
<dbReference type="GO" id="GO:2001244">
    <property type="term" value="P:positive regulation of intrinsic apoptotic signaling pathway"/>
    <property type="evidence" value="ECO:0000250"/>
    <property type="project" value="UniProtKB"/>
</dbReference>
<dbReference type="GO" id="GO:0045944">
    <property type="term" value="P:positive regulation of transcription by RNA polymerase II"/>
    <property type="evidence" value="ECO:0000250"/>
    <property type="project" value="UniProtKB"/>
</dbReference>
<dbReference type="GO" id="GO:0051262">
    <property type="term" value="P:protein tetramerization"/>
    <property type="evidence" value="ECO:0007669"/>
    <property type="project" value="InterPro"/>
</dbReference>
<dbReference type="GO" id="GO:0006357">
    <property type="term" value="P:regulation of transcription by RNA polymerase II"/>
    <property type="evidence" value="ECO:0000318"/>
    <property type="project" value="GO_Central"/>
</dbReference>
<dbReference type="CDD" id="cd08367">
    <property type="entry name" value="P53"/>
    <property type="match status" value="1"/>
</dbReference>
<dbReference type="FunFam" id="2.60.40.720:FF:000003">
    <property type="entry name" value="Cellular tumor antigen p53"/>
    <property type="match status" value="1"/>
</dbReference>
<dbReference type="FunFam" id="4.10.170.10:FF:000003">
    <property type="entry name" value="Cellular tumor antigen p53"/>
    <property type="match status" value="1"/>
</dbReference>
<dbReference type="Gene3D" id="2.60.40.720">
    <property type="match status" value="1"/>
</dbReference>
<dbReference type="Gene3D" id="6.10.50.20">
    <property type="match status" value="1"/>
</dbReference>
<dbReference type="Gene3D" id="4.10.170.10">
    <property type="entry name" value="p53-like tetramerisation domain"/>
    <property type="match status" value="1"/>
</dbReference>
<dbReference type="InterPro" id="IPR008967">
    <property type="entry name" value="p53-like_TF_DNA-bd_sf"/>
</dbReference>
<dbReference type="InterPro" id="IPR012346">
    <property type="entry name" value="p53/RUNT-type_TF_DNA-bd_sf"/>
</dbReference>
<dbReference type="InterPro" id="IPR011615">
    <property type="entry name" value="p53_DNA-bd"/>
</dbReference>
<dbReference type="InterPro" id="IPR036674">
    <property type="entry name" value="p53_tetramer_sf"/>
</dbReference>
<dbReference type="InterPro" id="IPR010991">
    <property type="entry name" value="p53_tetrameristn"/>
</dbReference>
<dbReference type="InterPro" id="IPR013872">
    <property type="entry name" value="p53_transactivation_domain"/>
</dbReference>
<dbReference type="InterPro" id="IPR002117">
    <property type="entry name" value="p53_tumour_suppressor"/>
</dbReference>
<dbReference type="PANTHER" id="PTHR11447">
    <property type="entry name" value="CELLULAR TUMOR ANTIGEN P53"/>
    <property type="match status" value="1"/>
</dbReference>
<dbReference type="PANTHER" id="PTHR11447:SF6">
    <property type="entry name" value="CELLULAR TUMOR ANTIGEN P53"/>
    <property type="match status" value="1"/>
</dbReference>
<dbReference type="Pfam" id="PF00870">
    <property type="entry name" value="P53"/>
    <property type="match status" value="1"/>
</dbReference>
<dbReference type="Pfam" id="PF08563">
    <property type="entry name" value="P53_TAD"/>
    <property type="match status" value="1"/>
</dbReference>
<dbReference type="Pfam" id="PF07710">
    <property type="entry name" value="P53_tetramer"/>
    <property type="match status" value="1"/>
</dbReference>
<dbReference type="PRINTS" id="PR00386">
    <property type="entry name" value="P53SUPPRESSR"/>
</dbReference>
<dbReference type="SUPFAM" id="SSF47719">
    <property type="entry name" value="p53 tetramerization domain"/>
    <property type="match status" value="1"/>
</dbReference>
<dbReference type="SUPFAM" id="SSF49417">
    <property type="entry name" value="p53-like transcription factors"/>
    <property type="match status" value="1"/>
</dbReference>
<dbReference type="PROSITE" id="PS00348">
    <property type="entry name" value="P53"/>
    <property type="match status" value="1"/>
</dbReference>
<proteinExistence type="evidence at transcript level"/>
<feature type="chain" id="PRO_0000185694" description="Cellular tumor antigen p53">
    <location>
        <begin position="1"/>
        <end position="386"/>
    </location>
</feature>
<feature type="DNA-binding region" evidence="3">
    <location>
        <begin position="94"/>
        <end position="285"/>
    </location>
</feature>
<feature type="region of interest" description="Interaction with CCAR2" evidence="3">
    <location>
        <begin position="1"/>
        <end position="313"/>
    </location>
</feature>
<feature type="region of interest" description="Transcription activation (acidic)">
    <location>
        <begin position="1"/>
        <end position="44"/>
    </location>
</feature>
<feature type="region of interest" description="Disordered" evidence="5">
    <location>
        <begin position="56"/>
        <end position="83"/>
    </location>
</feature>
<feature type="region of interest" description="Interaction with WWOX" evidence="1">
    <location>
        <begin position="63"/>
        <end position="102"/>
    </location>
</feature>
<feature type="region of interest" description="Interaction with HIPK1" evidence="1">
    <location>
        <begin position="92"/>
        <end position="363"/>
    </location>
</feature>
<feature type="region of interest" description="Required for interaction with ZNF385A" evidence="1">
    <location>
        <begin position="92"/>
        <end position="293"/>
    </location>
</feature>
<feature type="region of interest" description="Required for interaction with FBXO42" evidence="1">
    <location>
        <begin position="105"/>
        <end position="229"/>
    </location>
</feature>
<feature type="region of interest" description="Interaction with AXIN1" evidence="1">
    <location>
        <begin position="108"/>
        <end position="285"/>
    </location>
</feature>
<feature type="region of interest" description="Interaction with E4F1" evidence="1">
    <location>
        <begin position="249"/>
        <end position="287"/>
    </location>
</feature>
<feature type="region of interest" description="Interaction with DNA" evidence="1">
    <location>
        <begin position="266"/>
        <end position="273"/>
    </location>
</feature>
<feature type="region of interest" description="Disordered" evidence="5">
    <location>
        <begin position="275"/>
        <end position="318"/>
    </location>
</feature>
<feature type="region of interest" description="Interaction with HIPK2" evidence="1">
    <location>
        <begin position="312"/>
        <end position="353"/>
    </location>
</feature>
<feature type="region of interest" description="Oligomerization">
    <location>
        <begin position="318"/>
        <end position="349"/>
    </location>
</feature>
<feature type="region of interest" description="Disordered" evidence="5">
    <location>
        <begin position="348"/>
        <end position="386"/>
    </location>
</feature>
<feature type="region of interest" description="Interaction with USP7" evidence="1">
    <location>
        <begin position="352"/>
        <end position="356"/>
    </location>
</feature>
<feature type="region of interest" description="Basic (repression of DNA-binding)">
    <location>
        <begin position="361"/>
        <end position="380"/>
    </location>
</feature>
<feature type="short sequence motif" description="Bipartite nuclear localization signal" evidence="1">
    <location>
        <begin position="298"/>
        <end position="314"/>
    </location>
</feature>
<feature type="short sequence motif" description="Nuclear export signal" evidence="1">
    <location>
        <begin position="332"/>
        <end position="343"/>
    </location>
</feature>
<feature type="short sequence motif" description="[KR]-[STA]-K motif">
    <location>
        <begin position="363"/>
        <end position="365"/>
    </location>
</feature>
<feature type="compositionally biased region" description="Pro residues" evidence="5">
    <location>
        <begin position="63"/>
        <end position="77"/>
    </location>
</feature>
<feature type="compositionally biased region" description="Basic and acidic residues" evidence="5">
    <location>
        <begin position="348"/>
        <end position="357"/>
    </location>
</feature>
<feature type="compositionally biased region" description="Basic residues" evidence="5">
    <location>
        <begin position="358"/>
        <end position="377"/>
    </location>
</feature>
<feature type="binding site" evidence="3">
    <location>
        <position position="168"/>
    </location>
    <ligand>
        <name>Zn(2+)</name>
        <dbReference type="ChEBI" id="CHEBI:29105"/>
    </ligand>
</feature>
<feature type="binding site" evidence="3">
    <location>
        <position position="171"/>
    </location>
    <ligand>
        <name>Zn(2+)</name>
        <dbReference type="ChEBI" id="CHEBI:29105"/>
    </ligand>
</feature>
<feature type="binding site" evidence="3">
    <location>
        <position position="231"/>
    </location>
    <ligand>
        <name>Zn(2+)</name>
        <dbReference type="ChEBI" id="CHEBI:29105"/>
    </ligand>
</feature>
<feature type="binding site" evidence="3">
    <location>
        <position position="235"/>
    </location>
    <ligand>
        <name>Zn(2+)</name>
        <dbReference type="ChEBI" id="CHEBI:29105"/>
    </ligand>
</feature>
<feature type="site" description="Interaction with DNA" evidence="3">
    <location>
        <position position="112"/>
    </location>
</feature>
<feature type="modified residue" description="Phosphoserine; by CDK5, PRPK, AMPK, NUAK1 and ATM" evidence="3">
    <location>
        <position position="15"/>
    </location>
</feature>
<feature type="modified residue" description="Phosphothreonine; by CK1, VRK1 and VRK2" evidence="3">
    <location>
        <position position="18"/>
    </location>
</feature>
<feature type="modified residue" description="Phosphoserine; by CHEK2, CK1 and PLK3" evidence="3">
    <location>
        <position position="20"/>
    </location>
</feature>
<feature type="modified residue" description="Phosphoserine; by CDK5 and CDK7" evidence="3">
    <location>
        <position position="33"/>
    </location>
</feature>
<feature type="modified residue" description="Phosphoserine; by MAPKAPK5" evidence="3">
    <location>
        <position position="37"/>
    </location>
</feature>
<feature type="modified residue" description="N6-acetyllysine" evidence="3">
    <location>
        <position position="112"/>
    </location>
</feature>
<feature type="modified residue" description="N6-lactoyllysine" evidence="3">
    <location>
        <position position="112"/>
    </location>
</feature>
<feature type="modified residue" description="N6-lactoyllysine" evidence="3">
    <location>
        <position position="131"/>
    </location>
</feature>
<feature type="modified residue" description="Phosphoserine; by AURKB" evidence="3">
    <location>
        <position position="175"/>
    </location>
</feature>
<feature type="modified residue" description="Phosphoserine; by AURKB" evidence="3">
    <location>
        <position position="262"/>
    </location>
</feature>
<feature type="modified residue" description="Phosphothreonine; by AURKB" evidence="3">
    <location>
        <position position="277"/>
    </location>
</feature>
<feature type="modified residue" description="N6-acetyllysine" evidence="3">
    <location>
        <position position="298"/>
    </location>
</feature>
<feature type="modified residue" description="Phosphoserine; by AURKA, CDK1 and CDK2" evidence="3">
    <location>
        <position position="308"/>
    </location>
</feature>
<feature type="modified residue" description="N6-acetyllysine" evidence="2">
    <location>
        <position position="314"/>
    </location>
</feature>
<feature type="modified residue" description="Omega-N-methylarginine" evidence="3">
    <location>
        <position position="326"/>
    </location>
</feature>
<feature type="modified residue" description="Symmetric dimethylarginine" evidence="3">
    <location>
        <position position="330"/>
    </location>
</feature>
<feature type="modified residue" description="N6,N6-dimethyllysine; alternate" evidence="3">
    <location>
        <position position="363"/>
    </location>
</feature>
<feature type="modified residue" description="N6-methyllysine; by SMYD2; alternate" evidence="3">
    <location>
        <position position="363"/>
    </location>
</feature>
<feature type="modified residue" description="N6-methyllysine; by SETD7" evidence="3">
    <location>
        <position position="365"/>
    </location>
</feature>
<feature type="modified residue" description="N6,N6-dimethyllysine; by EHMT1 and EHMT2; alternate" evidence="3">
    <location>
        <position position="366"/>
    </location>
</feature>
<feature type="modified residue" description="N6-acetyllysine; alternate" evidence="3">
    <location>
        <position position="366"/>
    </location>
</feature>
<feature type="modified residue" description="N6-acetyllysine" evidence="3">
    <location>
        <position position="374"/>
    </location>
</feature>
<feature type="modified residue" description="N6,N6-dimethyllysine; alternate" evidence="3">
    <location>
        <position position="375"/>
    </location>
</feature>
<feature type="modified residue" description="N6-acetyllysine; alternate" evidence="3">
    <location>
        <position position="375"/>
    </location>
</feature>
<feature type="modified residue" description="N6-methyllysine; by KMT5A; alternate" evidence="3">
    <location>
        <position position="375"/>
    </location>
</feature>
<feature type="modified residue" description="Phosphoserine; by CK2, CDK2 and NUAK1" evidence="3">
    <location>
        <position position="385"/>
    </location>
</feature>
<feature type="cross-link" description="Glycyl lysine isopeptide (Lys-Gly) (interchain with G-Cter in ubiquitin)" evidence="3">
    <location>
        <position position="284"/>
    </location>
</feature>
<feature type="cross-link" description="Glycyl lysine isopeptide (Lys-Gly) (interchain with G-Cter in ubiquitin)" evidence="3">
    <location>
        <position position="285"/>
    </location>
</feature>
<feature type="cross-link" description="Glycyl lysine isopeptide (Lys-Gly) (interchain with G-Cter in ubiquitin)" evidence="3">
    <location>
        <position position="344"/>
    </location>
</feature>
<feature type="cross-link" description="Glycyl lysine isopeptide (Lys-Gly) (interchain with G-Cter in SUMO)" evidence="1">
    <location>
        <position position="379"/>
    </location>
</feature>
<feature type="sequence conflict" description="In Ref. 4; BAA08629." evidence="6" ref="4">
    <original>R</original>
    <variation>T</variation>
    <location>
        <position position="380"/>
    </location>
</feature>
<organism>
    <name type="scientific">Bos taurus</name>
    <name type="common">Bovine</name>
    <dbReference type="NCBI Taxonomy" id="9913"/>
    <lineage>
        <taxon>Eukaryota</taxon>
        <taxon>Metazoa</taxon>
        <taxon>Chordata</taxon>
        <taxon>Craniata</taxon>
        <taxon>Vertebrata</taxon>
        <taxon>Euteleostomi</taxon>
        <taxon>Mammalia</taxon>
        <taxon>Eutheria</taxon>
        <taxon>Laurasiatheria</taxon>
        <taxon>Artiodactyla</taxon>
        <taxon>Ruminantia</taxon>
        <taxon>Pecora</taxon>
        <taxon>Bovidae</taxon>
        <taxon>Bovinae</taxon>
        <taxon>Bos</taxon>
    </lineage>
</organism>
<name>P53_BOVIN</name>
<accession>P67939</accession>
<accession>Q29628</accession>
<accession>Q3ZCF1</accession>
<keyword id="KW-0007">Acetylation</keyword>
<keyword id="KW-0010">Activator</keyword>
<keyword id="KW-0053">Apoptosis</keyword>
<keyword id="KW-0090">Biological rhythms</keyword>
<keyword id="KW-0131">Cell cycle</keyword>
<keyword id="KW-0963">Cytoplasm</keyword>
<keyword id="KW-0206">Cytoskeleton</keyword>
<keyword id="KW-0238">DNA-binding</keyword>
<keyword id="KW-0256">Endoplasmic reticulum</keyword>
<keyword id="KW-1017">Isopeptide bond</keyword>
<keyword id="KW-0479">Metal-binding</keyword>
<keyword id="KW-0488">Methylation</keyword>
<keyword id="KW-0496">Mitochondrion</keyword>
<keyword id="KW-1210">Necrosis</keyword>
<keyword id="KW-0539">Nucleus</keyword>
<keyword id="KW-0597">Phosphoprotein</keyword>
<keyword id="KW-1185">Reference proteome</keyword>
<keyword id="KW-0678">Repressor</keyword>
<keyword id="KW-0804">Transcription</keyword>
<keyword id="KW-0805">Transcription regulation</keyword>
<keyword id="KW-0043">Tumor suppressor</keyword>
<keyword id="KW-0832">Ubl conjugation</keyword>
<keyword id="KW-0862">Zinc</keyword>
<gene>
    <name type="primary">TP53</name>
</gene>
<sequence>MEESQAELNVEPPLSQETFSDLWNLLPENNLLSSELSAPVDDLLPYTDVATWLDECPNEAPQMPEPSAPAAPPPATPAPATSWPLSSFVPSQKTYPGNYGFRLGFLQSGTAKSVTCTYSPSLNKLFCQLAKTCPVQLWVDSPPPPGTRVRAMAIYKKLEHMTEVVRRCPHHERSSDYSDGLAPPQHLIRVEGNLRAEYLDDRNTFRHSVVVPYESPEIDSECTTIHYNFMCNSSCMGGMNRRPILTIITLEDSCGNLLGRNSFEVRVCACPGRDRRTEEENLRKKGQSCPEPPPRSTKRALPTNTSSSPQPKKKPLDGEYFTLQIRGFKRYEMFRELNDALELKDALDGREPGESRAHSSHLKSKKRPSPSCHKKPMLKREGPDSD</sequence>
<protein>
    <recommendedName>
        <fullName>Cellular tumor antigen p53</fullName>
    </recommendedName>
    <alternativeName>
        <fullName>Tumor suppressor p53</fullName>
    </alternativeName>
</protein>
<evidence type="ECO:0000250" key="1"/>
<evidence type="ECO:0000250" key="2">
    <source>
        <dbReference type="UniProtKB" id="P02340"/>
    </source>
</evidence>
<evidence type="ECO:0000250" key="3">
    <source>
        <dbReference type="UniProtKB" id="P04637"/>
    </source>
</evidence>
<evidence type="ECO:0000250" key="4">
    <source>
        <dbReference type="UniProtKB" id="P10361"/>
    </source>
</evidence>
<evidence type="ECO:0000256" key="5">
    <source>
        <dbReference type="SAM" id="MobiDB-lite"/>
    </source>
</evidence>
<evidence type="ECO:0000305" key="6"/>
<reference key="1">
    <citation type="journal article" date="1995" name="DNA Seq.">
        <title>Nucleotide sequence of the bovine P53 tumor-suppressor cDNA.</title>
        <authorList>
            <person name="Dequiedt F."/>
            <person name="Kettmann R."/>
            <person name="Burny A."/>
            <person name="Willems L."/>
        </authorList>
    </citation>
    <scope>NUCLEOTIDE SEQUENCE [MRNA]</scope>
    <source>
        <tissue>Liver</tissue>
    </source>
</reference>
<reference key="2">
    <citation type="submission" date="2006-05" db="EMBL/GenBank/DDBJ databases">
        <title>p53 cDNA sequence of Theileria-transformed cell lines.</title>
        <authorList>
            <person name="Haller D."/>
            <person name="Seitzer U."/>
            <person name="Ahmed J."/>
        </authorList>
    </citation>
    <scope>NUCLEOTIDE SEQUENCE [MRNA]</scope>
</reference>
<reference key="3">
    <citation type="submission" date="2005-08" db="EMBL/GenBank/DDBJ databases">
        <authorList>
            <consortium name="NIH - Mammalian Gene Collection (MGC) project"/>
        </authorList>
    </citation>
    <scope>NUCLEOTIDE SEQUENCE [LARGE SCALE MRNA]</scope>
    <source>
        <strain>Crossbred X Angus</strain>
        <tissue>Ileum</tissue>
    </source>
</reference>
<reference key="4">
    <citation type="journal article" date="1996" name="Vet. Immunol. Immunopathol.">
        <title>Predominant p53 mutations in enzootic bovine leukemic cell lines.</title>
        <authorList>
            <person name="Komori H."/>
            <person name="Ishiguro N."/>
            <person name="Horiuchi M."/>
            <person name="Shinagawa M."/>
            <person name="Aida Y."/>
        </authorList>
    </citation>
    <scope>NUCLEOTIDE SEQUENCE [MRNA] OF 13-386</scope>
    <source>
        <strain>Holstein</strain>
        <tissue>Thymus</tissue>
    </source>
</reference>
<comment type="function">
    <text evidence="2 3">Multifunctional transcription factor that induces cell cycle arrest, DNA repair or apoptosis upon binding to its target DNA sequence. Acts as a tumor suppressor in many tumor types; induces growth arrest or apoptosis depending on the physiological circumstances and cell type. Negatively regulates cell division by controlling expression of a set of genes required for this process. One of the activated genes is an inhibitor of cyclin-dependent kinases. Apoptosis induction seems to be mediated either by stimulation of BAX and FAS antigen expression, or by repression of Bcl-2 expression. Its pro-apoptotic activity is activated via its interaction with PPP1R13B/ASPP1 or TP53BP2/ASPP2 (By similarity). However, this activity is inhibited when the interaction with PPP1R13B/ASPP1 or TP53BP2/ASPP2 is displaced by PPP1R13L/iASPP (By similarity). In cooperation with mitochondrial PPIF is involved in activating oxidative stress-induced necrosis; the function is largely independent of transcription. Prevents CDK7 kinase activity when associated to CAK complex in response to DNA damage, thus stopping cell cycle progression. Induces the transcription of long intergenic non-coding RNA p21 (lincRNA-p21) and lincRNA-Mkln1. LincRNA-p21 participates in TP53-dependent transcriptional repression leading to apoptosis and seems to have an effect on cell-cycle regulation. Regulates the circadian clock by repressing CLOCK-BMAL1-mediated transcriptional activation of PER2.</text>
</comment>
<comment type="cofactor">
    <cofactor evidence="1">
        <name>Zn(2+)</name>
        <dbReference type="ChEBI" id="CHEBI:29105"/>
    </cofactor>
    <text evidence="1">Binds 1 zinc ion per subunit.</text>
</comment>
<comment type="subunit">
    <text evidence="2 3 4">Forms homodimers and homotetramers (By similarity). Binds DNA as a homotetramer. Interacts with AXIN1. Probably part of a complex consisting of TP53, HIPK2 and AXIN1. Interacts with histone acetyltransferases EP300 and methyltransferases HRMT1L2 and CARM1, and recruits them to promoters. Interacts (via C-terminus) with TAF1; when TAF1 is part of the TFIID complex. Interacts with ING4; this interaction may be indirect. Found in a complex with CABLES1 and TP73. Interacts with HIPK1, HIPK2, and TP53INP1. Interacts with WWOX. Interacts with USP7 and SYVN1. Interacts with HSP90AB1. Interacts with CHD8; leading to recruit histone H1 and prevent transactivation activity. Interacts with ARMC10, BANP, CDKN2AIP, NUAK1, STK11/LKB1, UHRF2 and E4F. Interacts with YWHAZ; the interaction enhances TP53 transcriptional activity. Phosphorylation of YWHAZ on 'Ser-58' inhibits this interaction. Interacts (via DNA-binding domain) with MAML1 (via N-terminus). Interacts with MKRN1. Interacts with PML (via C-terminus). Interacts with MDM2; leading to ubiquitination and proteasomal degradation of TP53. Directly interacts with FBXO42; leading to ubiquitination and degradation of TP53. Interacts (phosphorylated at Ser-15 by ATM) with the phosphatase PP2A-PPP2R5C holoenzyme; regulates stress-induced TP53-dependent inhibition of cell proliferation. Interacts with PPP2R2A. Interacts with AURKA, DAXX, BRD7 and TRIM24. Interacts (when monomethylated at Lys-375) with L3MBTL1. Interacts with GRK5. Binds to the CAK complex (CDK7, cyclin H and MAT1) in response to DNA damage. Interacts with CDK5 in neurons. Interacts with AURKB, SETD2, UHRF2 and NOC2L. Interacts (via N-terminus) with PTK2/FAK1; this promotes ubiquitination by MDM2. Interacts with PTK2B/PYK2; this promotes ubiquitination by MDM2. Interacts with PRKCG. Interacts with PPIF; the association implicates preferentially tetrameric TP53, is induced by oxidative stress and is impaired by cyclosporin A (CsA). Interacts with SNAI1; the interaction induces SNAI1 degradation via MDM2-mediated ubiquitination and inhibits SNAI1-induced cell invasion. Interacts with UBC9. Interacts with ZNF385B; the interaction is direct. Interacts (via DNA-binding domain) with ZNF385A; the interaction is direct and enhances p53/TP53 transactivation functions on cell-cycle arrest target genes, resulting in growth arrest (By similarity). Interacts with ANKRD2. Interacts with RFFL and RNF34; involved in p53/TP53 ubiquitination. Interacts with MTA1 and COP1. Interacts with CCAR2 (via N-terminus). Interacts with MORC3. Interacts (via C-terminus) with POU4F2 (via C-terminus). Interacts (via oligomerization region) with NOP53; the interaction is direct and may prevent the MDM2-mediated proteasomal degradation of TP53. Interacts with AFG1L; mediates mitochondrial translocation of TP53. Interacts with UBD (By similarity). Interacts with TAF6 (By similarity). Interacts with C10orf90/FATS; the interaction inhibits binding of TP53 and MDM2 (By similarity). Interacts with NUPR1; interaction is stress-dependent. Forms a complex with EP300 and NUPR1; this complex binds CDKN1A promoter leading to transcriptional induction of CDKN1A (By similarity). Interacts with PRMT5 in response to DNA damage; the interaction is TTC5/STRAP dependent (By similarity). Interacts with PPP1R13L (via SH3 domain and ANK repeats); the interaction inhibits pro-apoptotic activity of p53/TP53 (By similarity). Interacts with PPP1R13B/ASPP1 and TP53BP2/ASPP2; the interactions promotes pro-apoptotic activity (By similarity). When phosphorylated at Ser-15, interacts with DDX3X and gamma-tubulin (By similarity). Interacts with KAT7/HBO1; leading to inhibit histone acetyltransferase activity of KAT7/HBO1 (By similarity). Interacts with S100A4; this interaction promotes TP53 degradation (By similarity). Interacts with TTC5/STRAP; the interaction may result in increased mitochondrial-dependent apoptosis (By similarity). Interacts with NQO1; this interaction is NADH-dependent, stabilizes TP53 in response to oxidative stress and protects it from ubiquitin-independent degradation by the 20S proteasome (By similarity). Interacts with DAZAP2 at TP53 target gene promoters; the interaction is triggered by DNA damage and leads to modulation of the expression of a subset of TP53 target genes, reducing DNA damage-induced cell death by limiting the expression of cell death-mediating TP53 target genes (By similarity). Interacts (via N-terminus) with ZNF768 (via zinc-finger domains); interaction might be facilitated by TP53 oligomerization state (By similarity). Forms a ternary complex with ALDOB and G6PD; this interaction is direct. ALDOB stabilizes the complex inhibiting G6PD activity and keeping oxidative pentose phosphate metabolism in check. Interacts with MORN3; the interactions mediate post-transcriptional modifications of TP53 by MDM2 and SIRT1 (By similarity). Interacts with HSPA9/MOT-2; the interaction promotes the degradation of TP53 (By similarity). Interacts with FBXO22; this interaction promotes TP53 proteasomal degradation (By similarity).</text>
</comment>
<comment type="subcellular location">
    <subcellularLocation>
        <location evidence="3">Cytoplasm</location>
    </subcellularLocation>
    <subcellularLocation>
        <location evidence="3">Nucleus</location>
    </subcellularLocation>
    <subcellularLocation>
        <location evidence="3">Nucleus</location>
        <location evidence="3">PML body</location>
    </subcellularLocation>
    <subcellularLocation>
        <location evidence="3">Endoplasmic reticulum</location>
    </subcellularLocation>
    <subcellularLocation>
        <location evidence="3">Mitochondrion matrix</location>
    </subcellularLocation>
    <subcellularLocation>
        <location evidence="3">Cytoplasm</location>
        <location evidence="3">Cytoskeleton</location>
        <location evidence="3">Microtubule organizing center</location>
        <location evidence="3">Centrosome</location>
    </subcellularLocation>
    <text evidence="3">Interaction with BANP promotes nuclear localization. Recruited into PML bodies together with CHEK2. Translocates to mitochondria upon oxidative stress. Translocates to mitochondria in response to mitomycin C treatment (By similarity). Competitive inhibition of TP53 interaction with HSPA9/MOT-2 by UBXN2A results in increased protein abundance and subsequent translocation of TP53 to the nucleus (By similarity).</text>
</comment>
<comment type="domain">
    <text evidence="3">The N-terminal and C-terminal disordered regions undergo liquid-liquid phase separation (LLPS) following homotetramerization and activation. Post-translational modifications, such as phosphorylation or lactylation affect the ability to undergo LLPS.</text>
</comment>
<comment type="domain">
    <text evidence="3">The nuclear export signal acts as a transcriptional repression domain. The TADI and TADII motifs (residues 17 to 25 and 48 to 56) correspond both to 9aaTAD motifs which are transactivation domains present in a large number of yeast and animal transcription factors.</text>
</comment>
<comment type="PTM">
    <text evidence="1 3">Phosphorylation on Ser residues mediates transcriptional activation. Phosphorylated on Thr-18 by VRK1, which may prevent the interaction with MDM2. Phosphorylated on Ser-20 by CHEK2 in response to DNA damage, which prevents ubiquitination by MDM2. Phosphorylated on Ser-20 by PLK3 in response to reactive oxygen species (ROS), promoting p53/TP53-mediated apoptosis. Phosphorylated on Ser-33 by CDK7 in a CAK complex in response to DNA damage. Phosphorylated by HIPK1. Phosphorylated on Ser-385 following UV but not gamma irradiation. Stabilized by CDK5-mediated phosphorylation in response to genotoxic and oxidative stresses at Ser-15 and Ser-33, leading to accumulation of p53/TP53, particularly in the nucleus, thus inducing the transactivation of p53/TP53 target genes. Phosphorylated at Ser-308 and Ser-385 by CDK2 in response to DNA-damage (By similarity). Phosphorylation at Ser-15 is required for interaction with DDX3X and gamma-tubulin (By similarity). Phosphorylation at Ser-385 regulates its ability to undergo liquid-liquid phase separation by increasing fluidity of TP53/p53 condensates (By similarity).</text>
</comment>
<comment type="PTM">
    <text evidence="3">Monomethylated at Lys-365 by SETD7, leading to stabilization and increased transcriptional activation. Monomethylated at Lys-363 by SMYD2, leading to decreased DNA-binding activity and subsequent transcriptional regulation activity. Lys-365 monomethylation prevents interaction with SMYD2 and subsequent monomethylation at Lys-363. Dimethylated at Lys-366 by EHMT1 and EHMT2. Monomethylated at Lys-375 by KMT5A, promoting interaction with L3MBTL1 and leading to repress transcriptional activity. Demethylation of dimethylated Lys-363 by KDM1A prevents interaction with TP53BP1 and represses TP53-mediated transcriptional activation (By similarity). Monomethylated at Arg-326 and dimethylated at Arg-330 by PRMT5; methylation is increased after DNA damage and might possibly affect TP53 target gene specificity (By similarity).</text>
</comment>
<comment type="PTM">
    <text evidence="1">Sumoylated with SUMO1. Sumoylated at Lys-379 by UBC9 (By similarity).</text>
</comment>
<comment type="PTM">
    <text evidence="2 3">Ubiquitinated by MDM2 and SYVN1, which leads to proteasomal degradation. Ubiquitinated by RFWD3, which works in cooperation with MDM2 and may catalyze the formation of short polyubiquitin chains on p53/TP53 that are not targeted to the proteasome. Ubiquitinated by MKRN1, which leads to proteasomal degradation. Deubiquitinated by USP10, leading to stabilize it. Ubiquitinated by TRIM24, RFFL, RNF34 and RNF125, which leads to proteasomal degradation. Ubiquitination by TOPORS induces degradation. Deubiquitination by USP7, leading to stabilize it. Ubiquitinated by COP1, which leads to proteasomal degradation (By similarity). Ubiquitination and subsequent proteasomal degradation is negatively regulated by CCAR2 (By similarity). Polyubiquitinated by C10orf90/FATS, polyubiquitination is 'Lys-48'-linkage independent and non-proteolytic, leading to TP53 stabilization (By similarity). Deubiquitinated by USP3, leading to stabilization (By similarity). Ubiquitinated by MSL2, promoting its cytoplasmic localization (By similarity). Also ubiquitinated by the SCF(FBXO22)-KDMA4A complex; leading to proteasomal degradation (By similarity).</text>
</comment>
<comment type="PTM">
    <text evidence="3">Acetylation of Lys-375 by CREBBP enhances transcriptional activity. Acetylation of Lys-375 by EP300. Deacetylation of Lys-375 by SIRT1 impairs its ability to induce proapoptotic program and modulate cell senescence. Deacetylation by SIRT2 impairs its ability to induce transcription activation in a AKT-dependent manner. Acetylation at Lys-374 increases stability. Deacetylation at Lys-374 by SIRT6 decreases its stability, thereby regulating cell senescence. Acetylated at Lys-112 by KAT5, KAT6A and KAT8; regulating its ability to induce proapoptotic program.</text>
</comment>
<comment type="PTM">
    <text evidence="3">Lactylation by AARS1 prevents ability to undergo liquid-liquid phase separation (LLPS), thereby inhibiting transcription factor activity.</text>
</comment>
<comment type="disease">
    <text>p53 is found in increased amounts in a wide variety of transformed cells. p53 is frequently mutated or inactivated in many types of cancer.</text>
</comment>
<comment type="similarity">
    <text evidence="6">Belongs to the p53 family.</text>
</comment>